<keyword id="KW-0004">4Fe-4S</keyword>
<keyword id="KW-0963">Cytoplasm</keyword>
<keyword id="KW-0408">Iron</keyword>
<keyword id="KW-0411">Iron-sulfur</keyword>
<keyword id="KW-0479">Metal-binding</keyword>
<keyword id="KW-0662">Pyridine nucleotide biosynthesis</keyword>
<keyword id="KW-0808">Transferase</keyword>
<evidence type="ECO:0000255" key="1">
    <source>
        <dbReference type="HAMAP-Rule" id="MF_00569"/>
    </source>
</evidence>
<gene>
    <name evidence="1" type="primary">nadA</name>
    <name type="ordered locus">BCA_4541</name>
</gene>
<accession>C1ETM6</accession>
<organism>
    <name type="scientific">Bacillus cereus (strain 03BB102)</name>
    <dbReference type="NCBI Taxonomy" id="572264"/>
    <lineage>
        <taxon>Bacteria</taxon>
        <taxon>Bacillati</taxon>
        <taxon>Bacillota</taxon>
        <taxon>Bacilli</taxon>
        <taxon>Bacillales</taxon>
        <taxon>Bacillaceae</taxon>
        <taxon>Bacillus</taxon>
        <taxon>Bacillus cereus group</taxon>
    </lineage>
</organism>
<name>NADA_BACC3</name>
<sequence>MSILEKVQPIETMLPERYYTMSTEDMEKRVREIKEKMGETLFIPGHHYQKDEVVQFSDAAGDSLQLAQVAASNKEAKYIVFCGVHFMAETADMLTTDEQVVILPDMRAGCSMADMADIEQTERAWKELTKLFGDTMIPLTYVNSTAAIKAFCGRNGGATVTSSNAKQMVSWAFTQKERLVFLPDQHLGRNTAYDLGIPLDKMAVWDPHTDSLEYDGDIEEIQVILWKGHCSVHQNFTVKNIENVRKNHPDMNIIVHPECCYEVVAASDYAGSTKYIIDMIELAPSGSKWAIGTEMNLVNRIIQQHPDKEIVSLNPFMCPCLTMNRIDLPHLLWALETIERGEEINVISVDKQVTEEAVLALNRMLERV</sequence>
<comment type="function">
    <text evidence="1">Catalyzes the condensation of iminoaspartate with dihydroxyacetone phosphate to form quinolinate.</text>
</comment>
<comment type="catalytic activity">
    <reaction evidence="1">
        <text>iminosuccinate + dihydroxyacetone phosphate = quinolinate + phosphate + 2 H2O + H(+)</text>
        <dbReference type="Rhea" id="RHEA:25888"/>
        <dbReference type="ChEBI" id="CHEBI:15377"/>
        <dbReference type="ChEBI" id="CHEBI:15378"/>
        <dbReference type="ChEBI" id="CHEBI:29959"/>
        <dbReference type="ChEBI" id="CHEBI:43474"/>
        <dbReference type="ChEBI" id="CHEBI:57642"/>
        <dbReference type="ChEBI" id="CHEBI:77875"/>
        <dbReference type="EC" id="2.5.1.72"/>
    </reaction>
    <physiologicalReaction direction="left-to-right" evidence="1">
        <dbReference type="Rhea" id="RHEA:25889"/>
    </physiologicalReaction>
</comment>
<comment type="cofactor">
    <cofactor evidence="1">
        <name>[4Fe-4S] cluster</name>
        <dbReference type="ChEBI" id="CHEBI:49883"/>
    </cofactor>
    <text evidence="1">Binds 1 [4Fe-4S] cluster per subunit.</text>
</comment>
<comment type="pathway">
    <text evidence="1">Cofactor biosynthesis; NAD(+) biosynthesis; quinolinate from iminoaspartate: step 1/1.</text>
</comment>
<comment type="subcellular location">
    <subcellularLocation>
        <location evidence="1">Cytoplasm</location>
    </subcellularLocation>
</comment>
<comment type="similarity">
    <text evidence="1">Belongs to the quinolinate synthase family. Type 3 subfamily.</text>
</comment>
<reference key="1">
    <citation type="submission" date="2009-02" db="EMBL/GenBank/DDBJ databases">
        <title>Genome sequence of Bacillus cereus 03BB102.</title>
        <authorList>
            <person name="Dodson R.J."/>
            <person name="Jackson P."/>
            <person name="Munk A.C."/>
            <person name="Brettin T."/>
            <person name="Bruce D."/>
            <person name="Detter C."/>
            <person name="Tapia R."/>
            <person name="Han C."/>
            <person name="Sutton G."/>
            <person name="Sims D."/>
        </authorList>
    </citation>
    <scope>NUCLEOTIDE SEQUENCE [LARGE SCALE GENOMIC DNA]</scope>
    <source>
        <strain>03BB102</strain>
    </source>
</reference>
<dbReference type="EC" id="2.5.1.72" evidence="1"/>
<dbReference type="EMBL" id="CP001407">
    <property type="protein sequence ID" value="ACO30773.1"/>
    <property type="molecule type" value="Genomic_DNA"/>
</dbReference>
<dbReference type="RefSeq" id="WP_000025291.1">
    <property type="nucleotide sequence ID" value="NZ_CP009318.1"/>
</dbReference>
<dbReference type="SMR" id="C1ETM6"/>
<dbReference type="KEGG" id="bcx:BCA_4541"/>
<dbReference type="PATRIC" id="fig|572264.18.peg.4490"/>
<dbReference type="UniPathway" id="UPA00253">
    <property type="reaction ID" value="UER00327"/>
</dbReference>
<dbReference type="Proteomes" id="UP000002210">
    <property type="component" value="Chromosome"/>
</dbReference>
<dbReference type="GO" id="GO:0005829">
    <property type="term" value="C:cytosol"/>
    <property type="evidence" value="ECO:0007669"/>
    <property type="project" value="TreeGrafter"/>
</dbReference>
<dbReference type="GO" id="GO:0051539">
    <property type="term" value="F:4 iron, 4 sulfur cluster binding"/>
    <property type="evidence" value="ECO:0007669"/>
    <property type="project" value="UniProtKB-KW"/>
</dbReference>
<dbReference type="GO" id="GO:0046872">
    <property type="term" value="F:metal ion binding"/>
    <property type="evidence" value="ECO:0007669"/>
    <property type="project" value="UniProtKB-KW"/>
</dbReference>
<dbReference type="GO" id="GO:0008987">
    <property type="term" value="F:quinolinate synthetase A activity"/>
    <property type="evidence" value="ECO:0007669"/>
    <property type="project" value="UniProtKB-UniRule"/>
</dbReference>
<dbReference type="GO" id="GO:0034628">
    <property type="term" value="P:'de novo' NAD biosynthetic process from L-aspartate"/>
    <property type="evidence" value="ECO:0007669"/>
    <property type="project" value="TreeGrafter"/>
</dbReference>
<dbReference type="FunFam" id="3.40.50.10800:FF:000001">
    <property type="entry name" value="Quinolinate synthase A"/>
    <property type="match status" value="1"/>
</dbReference>
<dbReference type="Gene3D" id="3.40.50.10800">
    <property type="entry name" value="NadA-like"/>
    <property type="match status" value="3"/>
</dbReference>
<dbReference type="HAMAP" id="MF_00569">
    <property type="entry name" value="NadA_type3"/>
    <property type="match status" value="1"/>
</dbReference>
<dbReference type="InterPro" id="IPR003473">
    <property type="entry name" value="NadA"/>
</dbReference>
<dbReference type="InterPro" id="IPR036094">
    <property type="entry name" value="NadA_sf"/>
</dbReference>
<dbReference type="InterPro" id="IPR023515">
    <property type="entry name" value="Quinolinate_synth_A_type3"/>
</dbReference>
<dbReference type="NCBIfam" id="TIGR00550">
    <property type="entry name" value="nadA"/>
    <property type="match status" value="1"/>
</dbReference>
<dbReference type="NCBIfam" id="NF006880">
    <property type="entry name" value="PRK09375.2-1"/>
    <property type="match status" value="1"/>
</dbReference>
<dbReference type="NCBIfam" id="NF006883">
    <property type="entry name" value="PRK09375.2-4"/>
    <property type="match status" value="1"/>
</dbReference>
<dbReference type="PANTHER" id="PTHR30573:SF0">
    <property type="entry name" value="QUINOLINATE SYNTHASE, CHLOROPLASTIC"/>
    <property type="match status" value="1"/>
</dbReference>
<dbReference type="PANTHER" id="PTHR30573">
    <property type="entry name" value="QUINOLINATE SYNTHETASE A"/>
    <property type="match status" value="1"/>
</dbReference>
<dbReference type="Pfam" id="PF02445">
    <property type="entry name" value="NadA"/>
    <property type="match status" value="1"/>
</dbReference>
<dbReference type="SUPFAM" id="SSF142754">
    <property type="entry name" value="NadA-like"/>
    <property type="match status" value="1"/>
</dbReference>
<feature type="chain" id="PRO_1000146822" description="Quinolinate synthase">
    <location>
        <begin position="1"/>
        <end position="368"/>
    </location>
</feature>
<feature type="binding site" evidence="1">
    <location>
        <position position="46"/>
    </location>
    <ligand>
        <name>iminosuccinate</name>
        <dbReference type="ChEBI" id="CHEBI:77875"/>
    </ligand>
</feature>
<feature type="binding site" evidence="1">
    <location>
        <position position="63"/>
    </location>
    <ligand>
        <name>iminosuccinate</name>
        <dbReference type="ChEBI" id="CHEBI:77875"/>
    </ligand>
</feature>
<feature type="binding site" evidence="1">
    <location>
        <position position="110"/>
    </location>
    <ligand>
        <name>[4Fe-4S] cluster</name>
        <dbReference type="ChEBI" id="CHEBI:49883"/>
    </ligand>
</feature>
<feature type="binding site" evidence="1">
    <location>
        <begin position="141"/>
        <end position="143"/>
    </location>
    <ligand>
        <name>iminosuccinate</name>
        <dbReference type="ChEBI" id="CHEBI:77875"/>
    </ligand>
</feature>
<feature type="binding site" evidence="1">
    <location>
        <position position="162"/>
    </location>
    <ligand>
        <name>iminosuccinate</name>
        <dbReference type="ChEBI" id="CHEBI:77875"/>
    </ligand>
</feature>
<feature type="binding site" evidence="1">
    <location>
        <position position="230"/>
    </location>
    <ligand>
        <name>[4Fe-4S] cluster</name>
        <dbReference type="ChEBI" id="CHEBI:49883"/>
    </ligand>
</feature>
<feature type="binding site" evidence="1">
    <location>
        <begin position="256"/>
        <end position="258"/>
    </location>
    <ligand>
        <name>iminosuccinate</name>
        <dbReference type="ChEBI" id="CHEBI:77875"/>
    </ligand>
</feature>
<feature type="binding site" evidence="1">
    <location>
        <position position="273"/>
    </location>
    <ligand>
        <name>iminosuccinate</name>
        <dbReference type="ChEBI" id="CHEBI:77875"/>
    </ligand>
</feature>
<feature type="binding site" evidence="1">
    <location>
        <position position="320"/>
    </location>
    <ligand>
        <name>[4Fe-4S] cluster</name>
        <dbReference type="ChEBI" id="CHEBI:49883"/>
    </ligand>
</feature>
<protein>
    <recommendedName>
        <fullName evidence="1">Quinolinate synthase</fullName>
        <ecNumber evidence="1">2.5.1.72</ecNumber>
    </recommendedName>
</protein>
<proteinExistence type="inferred from homology"/>